<feature type="chain" id="PRO_1000195966" description="Large ribosomal subunit protein bL32">
    <location>
        <begin position="1"/>
        <end position="48"/>
    </location>
</feature>
<feature type="region of interest" description="Disordered" evidence="2">
    <location>
        <begin position="24"/>
        <end position="48"/>
    </location>
</feature>
<comment type="similarity">
    <text evidence="1">Belongs to the bacterial ribosomal protein bL32 family.</text>
</comment>
<name>RL32_CAMLR</name>
<proteinExistence type="inferred from homology"/>
<keyword id="KW-1185">Reference proteome</keyword>
<keyword id="KW-0687">Ribonucleoprotein</keyword>
<keyword id="KW-0689">Ribosomal protein</keyword>
<protein>
    <recommendedName>
        <fullName evidence="1">Large ribosomal subunit protein bL32</fullName>
    </recommendedName>
    <alternativeName>
        <fullName evidence="3">50S ribosomal protein L32</fullName>
    </alternativeName>
</protein>
<accession>B9KDL3</accession>
<reference key="1">
    <citation type="journal article" date="2008" name="Foodborne Pathog. Dis.">
        <title>The complete genome sequence and analysis of the human pathogen Campylobacter lari.</title>
        <authorList>
            <person name="Miller W.G."/>
            <person name="Wang G."/>
            <person name="Binnewies T.T."/>
            <person name="Parker C.T."/>
        </authorList>
    </citation>
    <scope>NUCLEOTIDE SEQUENCE [LARGE SCALE GENOMIC DNA]</scope>
    <source>
        <strain>RM2100 / D67 / ATCC BAA-1060</strain>
    </source>
</reference>
<sequence length="48" mass="5668">MAVPKRRVSKTRAAKRRTHYKVTLPMPIKDKDGSYKMPHRVNPVTKEY</sequence>
<gene>
    <name evidence="1" type="primary">rpmF</name>
    <name type="ordered locus">Cla_1336</name>
</gene>
<dbReference type="EMBL" id="CP000932">
    <property type="protein sequence ID" value="ACM64651.1"/>
    <property type="molecule type" value="Genomic_DNA"/>
</dbReference>
<dbReference type="RefSeq" id="WP_012662034.1">
    <property type="nucleotide sequence ID" value="NC_012039.1"/>
</dbReference>
<dbReference type="SMR" id="B9KDL3"/>
<dbReference type="STRING" id="306263.Cla_1336"/>
<dbReference type="GeneID" id="93005369"/>
<dbReference type="KEGG" id="cla:CLA_1336"/>
<dbReference type="eggNOG" id="COG0333">
    <property type="taxonomic scope" value="Bacteria"/>
</dbReference>
<dbReference type="HOGENOM" id="CLU_129084_1_2_7"/>
<dbReference type="Proteomes" id="UP000007727">
    <property type="component" value="Chromosome"/>
</dbReference>
<dbReference type="GO" id="GO:0015934">
    <property type="term" value="C:large ribosomal subunit"/>
    <property type="evidence" value="ECO:0007669"/>
    <property type="project" value="InterPro"/>
</dbReference>
<dbReference type="GO" id="GO:0003735">
    <property type="term" value="F:structural constituent of ribosome"/>
    <property type="evidence" value="ECO:0007669"/>
    <property type="project" value="InterPro"/>
</dbReference>
<dbReference type="GO" id="GO:0006412">
    <property type="term" value="P:translation"/>
    <property type="evidence" value="ECO:0007669"/>
    <property type="project" value="UniProtKB-UniRule"/>
</dbReference>
<dbReference type="HAMAP" id="MF_00340">
    <property type="entry name" value="Ribosomal_bL32"/>
    <property type="match status" value="1"/>
</dbReference>
<dbReference type="InterPro" id="IPR002677">
    <property type="entry name" value="Ribosomal_bL32"/>
</dbReference>
<dbReference type="InterPro" id="IPR044957">
    <property type="entry name" value="Ribosomal_bL32_bact"/>
</dbReference>
<dbReference type="InterPro" id="IPR011332">
    <property type="entry name" value="Ribosomal_zn-bd"/>
</dbReference>
<dbReference type="NCBIfam" id="TIGR01031">
    <property type="entry name" value="rpmF_bact"/>
    <property type="match status" value="1"/>
</dbReference>
<dbReference type="PANTHER" id="PTHR35534">
    <property type="entry name" value="50S RIBOSOMAL PROTEIN L32"/>
    <property type="match status" value="1"/>
</dbReference>
<dbReference type="PANTHER" id="PTHR35534:SF1">
    <property type="entry name" value="LARGE RIBOSOMAL SUBUNIT PROTEIN BL32"/>
    <property type="match status" value="1"/>
</dbReference>
<dbReference type="Pfam" id="PF01783">
    <property type="entry name" value="Ribosomal_L32p"/>
    <property type="match status" value="1"/>
</dbReference>
<dbReference type="SUPFAM" id="SSF57829">
    <property type="entry name" value="Zn-binding ribosomal proteins"/>
    <property type="match status" value="1"/>
</dbReference>
<evidence type="ECO:0000255" key="1">
    <source>
        <dbReference type="HAMAP-Rule" id="MF_00340"/>
    </source>
</evidence>
<evidence type="ECO:0000256" key="2">
    <source>
        <dbReference type="SAM" id="MobiDB-lite"/>
    </source>
</evidence>
<evidence type="ECO:0000305" key="3"/>
<organism>
    <name type="scientific">Campylobacter lari (strain RM2100 / D67 / ATCC BAA-1060)</name>
    <dbReference type="NCBI Taxonomy" id="306263"/>
    <lineage>
        <taxon>Bacteria</taxon>
        <taxon>Pseudomonadati</taxon>
        <taxon>Campylobacterota</taxon>
        <taxon>Epsilonproteobacteria</taxon>
        <taxon>Campylobacterales</taxon>
        <taxon>Campylobacteraceae</taxon>
        <taxon>Campylobacter</taxon>
    </lineage>
</organism>